<feature type="chain" id="PRO_0000077130" description="Large ribosomal subunit protein uL3">
    <location>
        <begin position="1"/>
        <end position="157"/>
    </location>
</feature>
<feature type="region of interest" description="Disordered" evidence="2">
    <location>
        <begin position="57"/>
        <end position="98"/>
    </location>
</feature>
<evidence type="ECO:0000250" key="1"/>
<evidence type="ECO:0000256" key="2">
    <source>
        <dbReference type="SAM" id="MobiDB-lite"/>
    </source>
</evidence>
<evidence type="ECO:0000305" key="3"/>
<gene>
    <name type="primary">rplC</name>
    <name type="ordered locus">PAM_200</name>
</gene>
<reference key="1">
    <citation type="journal article" date="2004" name="Nat. Genet.">
        <title>Reductive evolution suggested from the complete genome sequence of a plant-pathogenic phytoplasma.</title>
        <authorList>
            <person name="Oshima K."/>
            <person name="Kakizawa S."/>
            <person name="Nishigawa H."/>
            <person name="Jung H.-Y."/>
            <person name="Wei W."/>
            <person name="Suzuki S."/>
            <person name="Arashida R."/>
            <person name="Nakata D."/>
            <person name="Miyata S."/>
            <person name="Ugaki M."/>
            <person name="Namba S."/>
        </authorList>
    </citation>
    <scope>NUCLEOTIDE SEQUENCE [LARGE SCALE GENOMIC DNA]</scope>
    <source>
        <strain>OY-M</strain>
    </source>
</reference>
<accession>P60455</accession>
<keyword id="KW-0687">Ribonucleoprotein</keyword>
<keyword id="KW-0689">Ribosomal protein</keyword>
<keyword id="KW-0694">RNA-binding</keyword>
<keyword id="KW-0699">rRNA-binding</keyword>
<dbReference type="EMBL" id="AP006628">
    <property type="protein sequence ID" value="BAD04285.1"/>
    <property type="molecule type" value="Genomic_DNA"/>
</dbReference>
<dbReference type="SMR" id="P60455"/>
<dbReference type="STRING" id="262768.PAM_200"/>
<dbReference type="KEGG" id="poy:PAM_200"/>
<dbReference type="eggNOG" id="COG0087">
    <property type="taxonomic scope" value="Bacteria"/>
</dbReference>
<dbReference type="HOGENOM" id="CLU_044142_4_2_14"/>
<dbReference type="Proteomes" id="UP000002523">
    <property type="component" value="Chromosome"/>
</dbReference>
<dbReference type="GO" id="GO:0022625">
    <property type="term" value="C:cytosolic large ribosomal subunit"/>
    <property type="evidence" value="ECO:0007669"/>
    <property type="project" value="TreeGrafter"/>
</dbReference>
<dbReference type="GO" id="GO:0019843">
    <property type="term" value="F:rRNA binding"/>
    <property type="evidence" value="ECO:0007669"/>
    <property type="project" value="UniProtKB-KW"/>
</dbReference>
<dbReference type="GO" id="GO:0003735">
    <property type="term" value="F:structural constituent of ribosome"/>
    <property type="evidence" value="ECO:0007669"/>
    <property type="project" value="InterPro"/>
</dbReference>
<dbReference type="GO" id="GO:0006412">
    <property type="term" value="P:translation"/>
    <property type="evidence" value="ECO:0007669"/>
    <property type="project" value="InterPro"/>
</dbReference>
<dbReference type="FunFam" id="2.40.30.10:FF:000004">
    <property type="entry name" value="50S ribosomal protein L3"/>
    <property type="match status" value="1"/>
</dbReference>
<dbReference type="Gene3D" id="2.40.30.10">
    <property type="entry name" value="Translation factors"/>
    <property type="match status" value="1"/>
</dbReference>
<dbReference type="InterPro" id="IPR000597">
    <property type="entry name" value="Ribosomal_uL3"/>
</dbReference>
<dbReference type="InterPro" id="IPR019927">
    <property type="entry name" value="Ribosomal_uL3_bac/org-type"/>
</dbReference>
<dbReference type="InterPro" id="IPR019926">
    <property type="entry name" value="Ribosomal_uL3_CS"/>
</dbReference>
<dbReference type="InterPro" id="IPR009000">
    <property type="entry name" value="Transl_B-barrel_sf"/>
</dbReference>
<dbReference type="NCBIfam" id="TIGR03625">
    <property type="entry name" value="L3_bact"/>
    <property type="match status" value="1"/>
</dbReference>
<dbReference type="PANTHER" id="PTHR11229">
    <property type="entry name" value="50S RIBOSOMAL PROTEIN L3"/>
    <property type="match status" value="1"/>
</dbReference>
<dbReference type="PANTHER" id="PTHR11229:SF16">
    <property type="entry name" value="LARGE RIBOSOMAL SUBUNIT PROTEIN UL3C"/>
    <property type="match status" value="1"/>
</dbReference>
<dbReference type="Pfam" id="PF00297">
    <property type="entry name" value="Ribosomal_L3"/>
    <property type="match status" value="1"/>
</dbReference>
<dbReference type="SUPFAM" id="SSF50447">
    <property type="entry name" value="Translation proteins"/>
    <property type="match status" value="1"/>
</dbReference>
<dbReference type="PROSITE" id="PS00474">
    <property type="entry name" value="RIBOSOMAL_L3"/>
    <property type="match status" value="1"/>
</dbReference>
<comment type="function">
    <text evidence="1">One of the primary rRNA binding proteins, it binds directly near the 3'-end of the 23S rRNA, where it nucleates assembly of the 50S subunit.</text>
</comment>
<comment type="subunit">
    <text evidence="1">Part of the 50S ribosomal subunit. Forms a cluster with proteins L14 and L19 (By similarity).</text>
</comment>
<comment type="similarity">
    <text evidence="3">Belongs to the universal ribosomal protein uL3 family.</text>
</comment>
<protein>
    <recommendedName>
        <fullName evidence="3">Large ribosomal subunit protein uL3</fullName>
    </recommendedName>
    <alternativeName>
        <fullName>50S ribosomal protein L3</fullName>
    </alternativeName>
</protein>
<name>RL3_ONYPE</name>
<proteinExistence type="inferred from homology"/>
<organism>
    <name type="scientific">Onion yellows phytoplasma (strain OY-M)</name>
    <dbReference type="NCBI Taxonomy" id="262768"/>
    <lineage>
        <taxon>Bacteria</taxon>
        <taxon>Bacillati</taxon>
        <taxon>Mycoplasmatota</taxon>
        <taxon>Mollicutes</taxon>
        <taxon>Acholeplasmatales</taxon>
        <taxon>Acholeplasmataceae</taxon>
        <taxon>Candidatus Phytoplasma</taxon>
        <taxon>16SrI (Aster yellows group)</taxon>
    </lineage>
</organism>
<sequence>MLGHFKKATTAPKRFIKEINFSADVNSNLANLAVGALITNDLFQVGDLVDVTGTSKGKGFAGSIKRHNQSRGPESHGSRYHRRPGSMGPIKGKLKGKKLPGHMGHETVTIQNLAILSVDTEKNLFLIKGNVPGPNKGFVIIKSAVKKLTKEQTHAKN</sequence>